<comment type="similarity">
    <text evidence="1">Belongs to the UPF0270 family.</text>
</comment>
<accession>A4WFF7</accession>
<dbReference type="EMBL" id="CP000653">
    <property type="protein sequence ID" value="ABP62437.1"/>
    <property type="molecule type" value="Genomic_DNA"/>
</dbReference>
<dbReference type="RefSeq" id="WP_015960743.1">
    <property type="nucleotide sequence ID" value="NC_009436.1"/>
</dbReference>
<dbReference type="SMR" id="A4WFF7"/>
<dbReference type="STRING" id="399742.Ent638_3781"/>
<dbReference type="KEGG" id="ent:Ent638_3781"/>
<dbReference type="eggNOG" id="COG3089">
    <property type="taxonomic scope" value="Bacteria"/>
</dbReference>
<dbReference type="HOGENOM" id="CLU_186759_1_0_6"/>
<dbReference type="OrthoDB" id="6120729at2"/>
<dbReference type="Proteomes" id="UP000000230">
    <property type="component" value="Chromosome"/>
</dbReference>
<dbReference type="Gene3D" id="1.10.10.610">
    <property type="entry name" value="YehU-like"/>
    <property type="match status" value="1"/>
</dbReference>
<dbReference type="HAMAP" id="MF_00690">
    <property type="entry name" value="UPF0270"/>
    <property type="match status" value="1"/>
</dbReference>
<dbReference type="InterPro" id="IPR010648">
    <property type="entry name" value="UPF0270"/>
</dbReference>
<dbReference type="InterPro" id="IPR036685">
    <property type="entry name" value="YehU-like_sf"/>
</dbReference>
<dbReference type="NCBIfam" id="NF003438">
    <property type="entry name" value="PRK04966.1"/>
    <property type="match status" value="1"/>
</dbReference>
<dbReference type="Pfam" id="PF06794">
    <property type="entry name" value="UPF0270"/>
    <property type="match status" value="1"/>
</dbReference>
<dbReference type="PIRSF" id="PIRSF006169">
    <property type="entry name" value="UCP006169"/>
    <property type="match status" value="1"/>
</dbReference>
<dbReference type="SUPFAM" id="SSF118001">
    <property type="entry name" value="YehU-like"/>
    <property type="match status" value="1"/>
</dbReference>
<protein>
    <recommendedName>
        <fullName evidence="1">UPF0270 protein Ent638_3781</fullName>
    </recommendedName>
</protein>
<gene>
    <name type="ordered locus">Ent638_3781</name>
</gene>
<sequence>MMIPWQDLAPETLDSLIESFVLREGTDYGEHERSLEQKVADVKRQLQNGEILLVWSELHETVNIMPRNQFRG</sequence>
<evidence type="ECO:0000255" key="1">
    <source>
        <dbReference type="HAMAP-Rule" id="MF_00690"/>
    </source>
</evidence>
<reference key="1">
    <citation type="journal article" date="2010" name="PLoS Genet.">
        <title>Genome sequence of the plant growth promoting endophytic bacterium Enterobacter sp. 638.</title>
        <authorList>
            <person name="Taghavi S."/>
            <person name="van der Lelie D."/>
            <person name="Hoffman A."/>
            <person name="Zhang Y.B."/>
            <person name="Walla M.D."/>
            <person name="Vangronsveld J."/>
            <person name="Newman L."/>
            <person name="Monchy S."/>
        </authorList>
    </citation>
    <scope>NUCLEOTIDE SEQUENCE [LARGE SCALE GENOMIC DNA]</scope>
    <source>
        <strain>638</strain>
    </source>
</reference>
<proteinExistence type="inferred from homology"/>
<name>Y3781_ENT38</name>
<organism>
    <name type="scientific">Enterobacter sp. (strain 638)</name>
    <dbReference type="NCBI Taxonomy" id="399742"/>
    <lineage>
        <taxon>Bacteria</taxon>
        <taxon>Pseudomonadati</taxon>
        <taxon>Pseudomonadota</taxon>
        <taxon>Gammaproteobacteria</taxon>
        <taxon>Enterobacterales</taxon>
        <taxon>Enterobacteriaceae</taxon>
        <taxon>Enterobacter</taxon>
    </lineage>
</organism>
<feature type="chain" id="PRO_1000062013" description="UPF0270 protein Ent638_3781">
    <location>
        <begin position="1"/>
        <end position="72"/>
    </location>
</feature>